<evidence type="ECO:0000255" key="1">
    <source>
        <dbReference type="HAMAP-Rule" id="MF_01382"/>
    </source>
</evidence>
<name>SECA_SULDN</name>
<reference key="1">
    <citation type="journal article" date="2008" name="Appl. Environ. Microbiol.">
        <title>Genome of the epsilonproteobacterial chemolithoautotroph Sulfurimonas denitrificans.</title>
        <authorList>
            <person name="Sievert S.M."/>
            <person name="Scott K.M."/>
            <person name="Klotz M.G."/>
            <person name="Chain P.S.G."/>
            <person name="Hauser L.J."/>
            <person name="Hemp J."/>
            <person name="Huegler M."/>
            <person name="Land M."/>
            <person name="Lapidus A."/>
            <person name="Larimer F.W."/>
            <person name="Lucas S."/>
            <person name="Malfatti S.A."/>
            <person name="Meyer F."/>
            <person name="Paulsen I.T."/>
            <person name="Ren Q."/>
            <person name="Simon J."/>
            <person name="Bailey K."/>
            <person name="Diaz E."/>
            <person name="Fitzpatrick K.A."/>
            <person name="Glover B."/>
            <person name="Gwatney N."/>
            <person name="Korajkic A."/>
            <person name="Long A."/>
            <person name="Mobberley J.M."/>
            <person name="Pantry S.N."/>
            <person name="Pazder G."/>
            <person name="Peterson S."/>
            <person name="Quintanilla J.D."/>
            <person name="Sprinkle R."/>
            <person name="Stephens J."/>
            <person name="Thomas P."/>
            <person name="Vaughn R."/>
            <person name="Weber M.J."/>
            <person name="Wooten L.L."/>
        </authorList>
    </citation>
    <scope>NUCLEOTIDE SEQUENCE [LARGE SCALE GENOMIC DNA]</scope>
    <source>
        <strain>ATCC 33889 / DSM 1251</strain>
    </source>
</reference>
<sequence length="857" mass="97464">MLQALMGKIFGTTNDRELKRYRQIVNKINNLESKYKALSDEALKSAFNEIKESVLSGGKSLDSVLVDSFAITREASTRVLNMRHFDVQLIGGIVLHEGKIAEMKTGEGKTLVATLPIVLNAISGKGVHLVTVNDYLASRDGNEMRPLYEFLGFSVGVILENMHDPVVKREVYNADITYGTNNEFGFDYLRDNMSYSRENMVQRGHNFVIVDEVDSILIDEARTPLIISGPTNRTLRDFKDANDIALKLLKDEHFSVDEKDKTVLLTEEGITRAEELFKVENLYSPENASLSHILDQALKANYLFEKDVDYVVNNGEVVIVDEFTGRLSEGRRFSEGLHQALEAKESVEIKEETQTLADITFQNYFRMYNKLAGMTGTAQTEASEFAQIYSLDVISIPTNIPILRKDLNDLIYKTEKEKFEAVIATIKKLSATGQPVLIGTASIEKSEILHEVLKKEKIAHTVLNAKNHAQEGEIIKNAGAKGAVTIATNMAGRGVDIKVNDEVKALGGLYIVGTERHENRRIDNQLRGRSGRQGDNGTTQFYLSLEDSLLRIFGSDKIKSIMERLGVEDGEYIESKMVTRAVEKAQKKVENMHYEGRKHIVEYDDVANEQRKIVYKFRNQLLDPEFNISMKINEIRAEYVAHLFANVSIFNGGVKEDFNLEKLFKLIHEEINLELNPADFASYEYEELLEVLTQKIKSSYDEKMSVLNDSICSEIERELYLKELDSAWREHLYAMDNMKTGIRLRAYNQKDPLVEYKKESFNLFTELVEDIKFNTIKTLQIIQFRVEDPEEEARRVAEKLDIQRKMNEASIQFNHYQSEMENESKKISRNDLCPCGSGKKYKLCCGKSGPKKGVFAS</sequence>
<accession>Q30RR0</accession>
<comment type="function">
    <text evidence="1">Part of the Sec protein translocase complex. Interacts with the SecYEG preprotein conducting channel. Has a central role in coupling the hydrolysis of ATP to the transfer of proteins into and across the cell membrane, serving as an ATP-driven molecular motor driving the stepwise translocation of polypeptide chains across the membrane.</text>
</comment>
<comment type="catalytic activity">
    <reaction evidence="1">
        <text>ATP + H2O + cellular proteinSide 1 = ADP + phosphate + cellular proteinSide 2.</text>
        <dbReference type="EC" id="7.4.2.8"/>
    </reaction>
</comment>
<comment type="cofactor">
    <cofactor evidence="1">
        <name>Zn(2+)</name>
        <dbReference type="ChEBI" id="CHEBI:29105"/>
    </cofactor>
    <text evidence="1">May bind 1 zinc ion per subunit.</text>
</comment>
<comment type="subunit">
    <text evidence="1">Monomer and homodimer. Part of the essential Sec protein translocation apparatus which comprises SecA, SecYEG and auxiliary proteins SecDF-YajC and YidC.</text>
</comment>
<comment type="subcellular location">
    <subcellularLocation>
        <location evidence="1">Cell inner membrane</location>
        <topology evidence="1">Peripheral membrane protein</topology>
        <orientation evidence="1">Cytoplasmic side</orientation>
    </subcellularLocation>
    <subcellularLocation>
        <location evidence="1">Cytoplasm</location>
    </subcellularLocation>
    <text evidence="1">Distribution is 50-50.</text>
</comment>
<comment type="similarity">
    <text evidence="1">Belongs to the SecA family.</text>
</comment>
<feature type="chain" id="PRO_0000321018" description="Protein translocase subunit SecA">
    <location>
        <begin position="1"/>
        <end position="857"/>
    </location>
</feature>
<feature type="binding site" evidence="1">
    <location>
        <position position="88"/>
    </location>
    <ligand>
        <name>ATP</name>
        <dbReference type="ChEBI" id="CHEBI:30616"/>
    </ligand>
</feature>
<feature type="binding site" evidence="1">
    <location>
        <begin position="106"/>
        <end position="110"/>
    </location>
    <ligand>
        <name>ATP</name>
        <dbReference type="ChEBI" id="CHEBI:30616"/>
    </ligand>
</feature>
<feature type="binding site" evidence="1">
    <location>
        <position position="496"/>
    </location>
    <ligand>
        <name>ATP</name>
        <dbReference type="ChEBI" id="CHEBI:30616"/>
    </ligand>
</feature>
<feature type="binding site" evidence="1">
    <location>
        <position position="833"/>
    </location>
    <ligand>
        <name>Zn(2+)</name>
        <dbReference type="ChEBI" id="CHEBI:29105"/>
    </ligand>
</feature>
<feature type="binding site" evidence="1">
    <location>
        <position position="835"/>
    </location>
    <ligand>
        <name>Zn(2+)</name>
        <dbReference type="ChEBI" id="CHEBI:29105"/>
    </ligand>
</feature>
<feature type="binding site" evidence="1">
    <location>
        <position position="844"/>
    </location>
    <ligand>
        <name>Zn(2+)</name>
        <dbReference type="ChEBI" id="CHEBI:29105"/>
    </ligand>
</feature>
<feature type="binding site" evidence="1">
    <location>
        <position position="845"/>
    </location>
    <ligand>
        <name>Zn(2+)</name>
        <dbReference type="ChEBI" id="CHEBI:29105"/>
    </ligand>
</feature>
<dbReference type="EC" id="7.4.2.8" evidence="1"/>
<dbReference type="EMBL" id="CP000153">
    <property type="protein sequence ID" value="ABB44321.1"/>
    <property type="molecule type" value="Genomic_DNA"/>
</dbReference>
<dbReference type="RefSeq" id="WP_011372673.1">
    <property type="nucleotide sequence ID" value="NC_007575.1"/>
</dbReference>
<dbReference type="SMR" id="Q30RR0"/>
<dbReference type="STRING" id="326298.Suden_1043"/>
<dbReference type="KEGG" id="tdn:Suden_1043"/>
<dbReference type="eggNOG" id="COG0653">
    <property type="taxonomic scope" value="Bacteria"/>
</dbReference>
<dbReference type="HOGENOM" id="CLU_005314_3_0_7"/>
<dbReference type="OrthoDB" id="9805579at2"/>
<dbReference type="Proteomes" id="UP000002714">
    <property type="component" value="Chromosome"/>
</dbReference>
<dbReference type="GO" id="GO:0031522">
    <property type="term" value="C:cell envelope Sec protein transport complex"/>
    <property type="evidence" value="ECO:0007669"/>
    <property type="project" value="TreeGrafter"/>
</dbReference>
<dbReference type="GO" id="GO:0005829">
    <property type="term" value="C:cytosol"/>
    <property type="evidence" value="ECO:0007669"/>
    <property type="project" value="TreeGrafter"/>
</dbReference>
<dbReference type="GO" id="GO:0005886">
    <property type="term" value="C:plasma membrane"/>
    <property type="evidence" value="ECO:0007669"/>
    <property type="project" value="UniProtKB-SubCell"/>
</dbReference>
<dbReference type="GO" id="GO:0005524">
    <property type="term" value="F:ATP binding"/>
    <property type="evidence" value="ECO:0007669"/>
    <property type="project" value="UniProtKB-UniRule"/>
</dbReference>
<dbReference type="GO" id="GO:0046872">
    <property type="term" value="F:metal ion binding"/>
    <property type="evidence" value="ECO:0007669"/>
    <property type="project" value="UniProtKB-KW"/>
</dbReference>
<dbReference type="GO" id="GO:0008564">
    <property type="term" value="F:protein-exporting ATPase activity"/>
    <property type="evidence" value="ECO:0007669"/>
    <property type="project" value="UniProtKB-EC"/>
</dbReference>
<dbReference type="GO" id="GO:0065002">
    <property type="term" value="P:intracellular protein transmembrane transport"/>
    <property type="evidence" value="ECO:0007669"/>
    <property type="project" value="UniProtKB-UniRule"/>
</dbReference>
<dbReference type="GO" id="GO:0017038">
    <property type="term" value="P:protein import"/>
    <property type="evidence" value="ECO:0007669"/>
    <property type="project" value="InterPro"/>
</dbReference>
<dbReference type="GO" id="GO:0006605">
    <property type="term" value="P:protein targeting"/>
    <property type="evidence" value="ECO:0007669"/>
    <property type="project" value="UniProtKB-UniRule"/>
</dbReference>
<dbReference type="GO" id="GO:0043952">
    <property type="term" value="P:protein transport by the Sec complex"/>
    <property type="evidence" value="ECO:0007669"/>
    <property type="project" value="TreeGrafter"/>
</dbReference>
<dbReference type="CDD" id="cd17928">
    <property type="entry name" value="DEXDc_SecA"/>
    <property type="match status" value="1"/>
</dbReference>
<dbReference type="CDD" id="cd18803">
    <property type="entry name" value="SF2_C_secA"/>
    <property type="match status" value="1"/>
</dbReference>
<dbReference type="FunFam" id="3.40.50.300:FF:000429">
    <property type="entry name" value="Preprotein translocase subunit SecA"/>
    <property type="match status" value="1"/>
</dbReference>
<dbReference type="FunFam" id="3.90.1440.10:FF:000001">
    <property type="entry name" value="Preprotein translocase subunit SecA"/>
    <property type="match status" value="1"/>
</dbReference>
<dbReference type="Gene3D" id="1.10.3060.10">
    <property type="entry name" value="Helical scaffold and wing domains of SecA"/>
    <property type="match status" value="1"/>
</dbReference>
<dbReference type="Gene3D" id="3.40.50.300">
    <property type="entry name" value="P-loop containing nucleotide triphosphate hydrolases"/>
    <property type="match status" value="3"/>
</dbReference>
<dbReference type="Gene3D" id="3.90.1440.10">
    <property type="entry name" value="SecA, preprotein cross-linking domain"/>
    <property type="match status" value="1"/>
</dbReference>
<dbReference type="HAMAP" id="MF_01382">
    <property type="entry name" value="SecA"/>
    <property type="match status" value="1"/>
</dbReference>
<dbReference type="InterPro" id="IPR014001">
    <property type="entry name" value="Helicase_ATP-bd"/>
</dbReference>
<dbReference type="InterPro" id="IPR001650">
    <property type="entry name" value="Helicase_C-like"/>
</dbReference>
<dbReference type="InterPro" id="IPR027417">
    <property type="entry name" value="P-loop_NTPase"/>
</dbReference>
<dbReference type="InterPro" id="IPR004027">
    <property type="entry name" value="SEC_C_motif"/>
</dbReference>
<dbReference type="InterPro" id="IPR000185">
    <property type="entry name" value="SecA"/>
</dbReference>
<dbReference type="InterPro" id="IPR011115">
    <property type="entry name" value="SecA_DEAD"/>
</dbReference>
<dbReference type="InterPro" id="IPR014018">
    <property type="entry name" value="SecA_motor_DEAD"/>
</dbReference>
<dbReference type="InterPro" id="IPR011130">
    <property type="entry name" value="SecA_preprotein_X-link_dom"/>
</dbReference>
<dbReference type="InterPro" id="IPR044722">
    <property type="entry name" value="SecA_SF2_C"/>
</dbReference>
<dbReference type="InterPro" id="IPR011116">
    <property type="entry name" value="SecA_Wing/Scaffold"/>
</dbReference>
<dbReference type="InterPro" id="IPR036266">
    <property type="entry name" value="SecA_Wing/Scaffold_sf"/>
</dbReference>
<dbReference type="InterPro" id="IPR036670">
    <property type="entry name" value="SecA_X-link_sf"/>
</dbReference>
<dbReference type="NCBIfam" id="NF006630">
    <property type="entry name" value="PRK09200.1"/>
    <property type="match status" value="1"/>
</dbReference>
<dbReference type="NCBIfam" id="NF009538">
    <property type="entry name" value="PRK12904.1"/>
    <property type="match status" value="1"/>
</dbReference>
<dbReference type="NCBIfam" id="TIGR00963">
    <property type="entry name" value="secA"/>
    <property type="match status" value="1"/>
</dbReference>
<dbReference type="PANTHER" id="PTHR30612:SF0">
    <property type="entry name" value="CHLOROPLAST PROTEIN-TRANSPORTING ATPASE"/>
    <property type="match status" value="1"/>
</dbReference>
<dbReference type="PANTHER" id="PTHR30612">
    <property type="entry name" value="SECA INNER MEMBRANE COMPONENT OF SEC PROTEIN SECRETION SYSTEM"/>
    <property type="match status" value="1"/>
</dbReference>
<dbReference type="Pfam" id="PF21090">
    <property type="entry name" value="P-loop_SecA"/>
    <property type="match status" value="1"/>
</dbReference>
<dbReference type="Pfam" id="PF02810">
    <property type="entry name" value="SEC-C"/>
    <property type="match status" value="1"/>
</dbReference>
<dbReference type="Pfam" id="PF07517">
    <property type="entry name" value="SecA_DEAD"/>
    <property type="match status" value="1"/>
</dbReference>
<dbReference type="Pfam" id="PF01043">
    <property type="entry name" value="SecA_PP_bind"/>
    <property type="match status" value="1"/>
</dbReference>
<dbReference type="Pfam" id="PF07516">
    <property type="entry name" value="SecA_SW"/>
    <property type="match status" value="1"/>
</dbReference>
<dbReference type="PRINTS" id="PR00906">
    <property type="entry name" value="SECA"/>
</dbReference>
<dbReference type="SMART" id="SM00957">
    <property type="entry name" value="SecA_DEAD"/>
    <property type="match status" value="1"/>
</dbReference>
<dbReference type="SMART" id="SM00958">
    <property type="entry name" value="SecA_PP_bind"/>
    <property type="match status" value="1"/>
</dbReference>
<dbReference type="SUPFAM" id="SSF81886">
    <property type="entry name" value="Helical scaffold and wing domains of SecA"/>
    <property type="match status" value="1"/>
</dbReference>
<dbReference type="SUPFAM" id="SSF52540">
    <property type="entry name" value="P-loop containing nucleoside triphosphate hydrolases"/>
    <property type="match status" value="2"/>
</dbReference>
<dbReference type="SUPFAM" id="SSF81767">
    <property type="entry name" value="Pre-protein crosslinking domain of SecA"/>
    <property type="match status" value="1"/>
</dbReference>
<dbReference type="PROSITE" id="PS51196">
    <property type="entry name" value="SECA_MOTOR_DEAD"/>
    <property type="match status" value="1"/>
</dbReference>
<organism>
    <name type="scientific">Sulfurimonas denitrificans (strain ATCC 33889 / DSM 1251)</name>
    <name type="common">Thiomicrospira denitrificans (strain ATCC 33889 / DSM 1251)</name>
    <dbReference type="NCBI Taxonomy" id="326298"/>
    <lineage>
        <taxon>Bacteria</taxon>
        <taxon>Pseudomonadati</taxon>
        <taxon>Campylobacterota</taxon>
        <taxon>Epsilonproteobacteria</taxon>
        <taxon>Campylobacterales</taxon>
        <taxon>Sulfurimonadaceae</taxon>
        <taxon>Sulfurimonas</taxon>
    </lineage>
</organism>
<keyword id="KW-0067">ATP-binding</keyword>
<keyword id="KW-0997">Cell inner membrane</keyword>
<keyword id="KW-1003">Cell membrane</keyword>
<keyword id="KW-0963">Cytoplasm</keyword>
<keyword id="KW-0472">Membrane</keyword>
<keyword id="KW-0479">Metal-binding</keyword>
<keyword id="KW-0547">Nucleotide-binding</keyword>
<keyword id="KW-0653">Protein transport</keyword>
<keyword id="KW-1185">Reference proteome</keyword>
<keyword id="KW-1278">Translocase</keyword>
<keyword id="KW-0811">Translocation</keyword>
<keyword id="KW-0813">Transport</keyword>
<keyword id="KW-0862">Zinc</keyword>
<protein>
    <recommendedName>
        <fullName evidence="1">Protein translocase subunit SecA</fullName>
        <ecNumber evidence="1">7.4.2.8</ecNumber>
    </recommendedName>
</protein>
<gene>
    <name evidence="1" type="primary">secA</name>
    <name type="ordered locus">Suden_1043</name>
</gene>
<proteinExistence type="inferred from homology"/>